<organism>
    <name type="scientific">Vernicia fordii</name>
    <name type="common">Tung</name>
    <name type="synonym">Aleurites fordii</name>
    <dbReference type="NCBI Taxonomy" id="73154"/>
    <lineage>
        <taxon>Eukaryota</taxon>
        <taxon>Viridiplantae</taxon>
        <taxon>Streptophyta</taxon>
        <taxon>Embryophyta</taxon>
        <taxon>Tracheophyta</taxon>
        <taxon>Spermatophyta</taxon>
        <taxon>Magnoliopsida</taxon>
        <taxon>eudicotyledons</taxon>
        <taxon>Gunneridae</taxon>
        <taxon>Pentapetalae</taxon>
        <taxon>rosids</taxon>
        <taxon>fabids</taxon>
        <taxon>Malpighiales</taxon>
        <taxon>Euphorbiaceae</taxon>
        <taxon>Crotonoideae</taxon>
        <taxon>Aleuritideae</taxon>
        <taxon>Vernicia</taxon>
    </lineage>
</organism>
<accession>O81187</accession>
<dbReference type="EMBL" id="AF047694">
    <property type="protein sequence ID" value="AAC39481.1"/>
    <property type="molecule type" value="mRNA"/>
</dbReference>
<dbReference type="SMR" id="O81187"/>
<dbReference type="GO" id="GO:0005737">
    <property type="term" value="C:cytoplasm"/>
    <property type="evidence" value="ECO:0007669"/>
    <property type="project" value="UniProtKB-SubCell"/>
</dbReference>
<dbReference type="GO" id="GO:0015038">
    <property type="term" value="F:glutathione disulfide oxidoreductase activity"/>
    <property type="evidence" value="ECO:0007669"/>
    <property type="project" value="TreeGrafter"/>
</dbReference>
<dbReference type="GO" id="GO:0034599">
    <property type="term" value="P:cellular response to oxidative stress"/>
    <property type="evidence" value="ECO:0007669"/>
    <property type="project" value="TreeGrafter"/>
</dbReference>
<dbReference type="CDD" id="cd03419">
    <property type="entry name" value="GRX_GRXh_1_2_like"/>
    <property type="match status" value="1"/>
</dbReference>
<dbReference type="FunFam" id="3.40.30.10:FF:000093">
    <property type="entry name" value="Glutaredoxin 2"/>
    <property type="match status" value="1"/>
</dbReference>
<dbReference type="Gene3D" id="3.40.30.10">
    <property type="entry name" value="Glutaredoxin"/>
    <property type="match status" value="1"/>
</dbReference>
<dbReference type="InterPro" id="IPR011767">
    <property type="entry name" value="GLR_AS"/>
</dbReference>
<dbReference type="InterPro" id="IPR002109">
    <property type="entry name" value="Glutaredoxin"/>
</dbReference>
<dbReference type="InterPro" id="IPR011899">
    <property type="entry name" value="Glutaredoxin_euk/vir"/>
</dbReference>
<dbReference type="InterPro" id="IPR014025">
    <property type="entry name" value="Glutaredoxin_subgr"/>
</dbReference>
<dbReference type="InterPro" id="IPR036249">
    <property type="entry name" value="Thioredoxin-like_sf"/>
</dbReference>
<dbReference type="NCBIfam" id="TIGR02180">
    <property type="entry name" value="GRX_euk"/>
    <property type="match status" value="1"/>
</dbReference>
<dbReference type="PANTHER" id="PTHR45694">
    <property type="entry name" value="GLUTAREDOXIN 2"/>
    <property type="match status" value="1"/>
</dbReference>
<dbReference type="PANTHER" id="PTHR45694:SF14">
    <property type="entry name" value="GLUTAREDOXIN-C2"/>
    <property type="match status" value="1"/>
</dbReference>
<dbReference type="Pfam" id="PF00462">
    <property type="entry name" value="Glutaredoxin"/>
    <property type="match status" value="1"/>
</dbReference>
<dbReference type="PRINTS" id="PR00160">
    <property type="entry name" value="GLUTAREDOXIN"/>
</dbReference>
<dbReference type="SUPFAM" id="SSF52833">
    <property type="entry name" value="Thioredoxin-like"/>
    <property type="match status" value="1"/>
</dbReference>
<dbReference type="PROSITE" id="PS00195">
    <property type="entry name" value="GLUTAREDOXIN_1"/>
    <property type="match status" value="1"/>
</dbReference>
<dbReference type="PROSITE" id="PS51354">
    <property type="entry name" value="GLUTAREDOXIN_2"/>
    <property type="match status" value="1"/>
</dbReference>
<protein>
    <recommendedName>
        <fullName>Glutaredoxin</fullName>
    </recommendedName>
</protein>
<name>GLRX_VERFO</name>
<evidence type="ECO:0000250" key="1"/>
<evidence type="ECO:0000255" key="2">
    <source>
        <dbReference type="PROSITE-ProRule" id="PRU00686"/>
    </source>
</evidence>
<evidence type="ECO:0000305" key="3"/>
<sequence>MAMIKAQELVSSNSVVVFSKTFCPYCTSVKQLLNQLGAQFKVIELDSESDGSDLQNALAEWTGQRTVPNVFIGGKHIGGCDKTTGMHQEGKLIPLLTEAGAVKA</sequence>
<proteinExistence type="inferred from homology"/>
<comment type="function">
    <text evidence="1">Has a glutathione-disulfide oxidoreductase activity in the presence of NADPH and glutathione reductase. Reduces low molecular weight disulfides and proteins (By similarity).</text>
</comment>
<comment type="subcellular location">
    <subcellularLocation>
        <location evidence="1">Cytoplasm</location>
    </subcellularLocation>
</comment>
<comment type="similarity">
    <text evidence="3">Belongs to the glutaredoxin family. CPYC subfamily.</text>
</comment>
<feature type="chain" id="PRO_0000141609" description="Glutaredoxin">
    <location>
        <begin position="1"/>
        <end position="104"/>
    </location>
</feature>
<feature type="domain" description="Glutaredoxin" evidence="2">
    <location>
        <begin position="3"/>
        <end position="103"/>
    </location>
</feature>
<feature type="disulfide bond" description="Redox-active" evidence="1">
    <location>
        <begin position="23"/>
        <end position="26"/>
    </location>
</feature>
<keyword id="KW-0963">Cytoplasm</keyword>
<keyword id="KW-1015">Disulfide bond</keyword>
<keyword id="KW-0249">Electron transport</keyword>
<keyword id="KW-0676">Redox-active center</keyword>
<keyword id="KW-0813">Transport</keyword>
<reference key="1">
    <citation type="online journal article" date="1998" name="Plant Gene Register">
        <title>Nucleotide sequence of a cDNA clone for glutaredoxin from Aleurites fordii seeds.</title>
        <authorList>
            <person name="Tang F."/>
            <person name="Dyer J.M."/>
            <person name="Lax A.R."/>
            <person name="Shih D.S."/>
            <person name="Chapital D.C."/>
            <person name="Pepperman A.B."/>
        </authorList>
        <locator>PGR98-090</locator>
    </citation>
    <scope>NUCLEOTIDE SEQUENCE [MRNA]</scope>
    <source>
        <strain>cv. L-2</strain>
        <tissue>Seed</tissue>
    </source>
</reference>